<name>FABZ_OENOB</name>
<feature type="chain" id="PRO_0000340792" description="3-hydroxyacyl-[acyl-carrier-protein] dehydratase FabZ">
    <location>
        <begin position="1"/>
        <end position="139"/>
    </location>
</feature>
<feature type="active site" evidence="1">
    <location>
        <position position="47"/>
    </location>
</feature>
<gene>
    <name evidence="1" type="primary">fabZ</name>
    <name type="ordered locus">OEOE_1586</name>
</gene>
<sequence>MTATEIQKVLPHRYPMLMVDRVLELVSGERILAQKNVTINEEFFQGHFPGNPVMPGVLIVEALAQAGAIALLKMDRFAGKTPYFGGVDKVKFRRMVRPGDTLTLNVTLDKLKDNIGSAHALATVDGEKACSADLLFLIK</sequence>
<organism>
    <name type="scientific">Oenococcus oeni (strain ATCC BAA-331 / PSU-1)</name>
    <dbReference type="NCBI Taxonomy" id="203123"/>
    <lineage>
        <taxon>Bacteria</taxon>
        <taxon>Bacillati</taxon>
        <taxon>Bacillota</taxon>
        <taxon>Bacilli</taxon>
        <taxon>Lactobacillales</taxon>
        <taxon>Lactobacillaceae</taxon>
        <taxon>Oenococcus</taxon>
    </lineage>
</organism>
<evidence type="ECO:0000255" key="1">
    <source>
        <dbReference type="HAMAP-Rule" id="MF_00406"/>
    </source>
</evidence>
<evidence type="ECO:0000305" key="2"/>
<comment type="function">
    <text evidence="1">Involved in unsaturated fatty acids biosynthesis. Catalyzes the dehydration of short chain beta-hydroxyacyl-ACPs and long chain saturated and unsaturated beta-hydroxyacyl-ACPs.</text>
</comment>
<comment type="catalytic activity">
    <reaction evidence="1">
        <text>a (3R)-hydroxyacyl-[ACP] = a (2E)-enoyl-[ACP] + H2O</text>
        <dbReference type="Rhea" id="RHEA:13097"/>
        <dbReference type="Rhea" id="RHEA-COMP:9925"/>
        <dbReference type="Rhea" id="RHEA-COMP:9945"/>
        <dbReference type="ChEBI" id="CHEBI:15377"/>
        <dbReference type="ChEBI" id="CHEBI:78784"/>
        <dbReference type="ChEBI" id="CHEBI:78827"/>
        <dbReference type="EC" id="4.2.1.59"/>
    </reaction>
</comment>
<comment type="subcellular location">
    <subcellularLocation>
        <location evidence="1">Cytoplasm</location>
    </subcellularLocation>
</comment>
<comment type="similarity">
    <text evidence="1">Belongs to the thioester dehydratase family. FabZ subfamily.</text>
</comment>
<comment type="sequence caution" evidence="2">
    <conflict type="erroneous initiation">
        <sequence resource="EMBL-CDS" id="ABJ57438"/>
    </conflict>
</comment>
<keyword id="KW-0963">Cytoplasm</keyword>
<keyword id="KW-0441">Lipid A biosynthesis</keyword>
<keyword id="KW-0444">Lipid biosynthesis</keyword>
<keyword id="KW-0443">Lipid metabolism</keyword>
<keyword id="KW-0456">Lyase</keyword>
<keyword id="KW-1185">Reference proteome</keyword>
<accession>Q04DN4</accession>
<proteinExistence type="inferred from homology"/>
<dbReference type="EC" id="4.2.1.59" evidence="1"/>
<dbReference type="EMBL" id="CP000411">
    <property type="protein sequence ID" value="ABJ57438.1"/>
    <property type="status" value="ALT_INIT"/>
    <property type="molecule type" value="Genomic_DNA"/>
</dbReference>
<dbReference type="SMR" id="Q04DN4"/>
<dbReference type="STRING" id="203123.OEOE_1586"/>
<dbReference type="KEGG" id="ooe:OEOE_1586"/>
<dbReference type="eggNOG" id="COG0764">
    <property type="taxonomic scope" value="Bacteria"/>
</dbReference>
<dbReference type="HOGENOM" id="CLU_078912_3_0_9"/>
<dbReference type="Proteomes" id="UP000000774">
    <property type="component" value="Chromosome"/>
</dbReference>
<dbReference type="GO" id="GO:0005737">
    <property type="term" value="C:cytoplasm"/>
    <property type="evidence" value="ECO:0007669"/>
    <property type="project" value="UniProtKB-SubCell"/>
</dbReference>
<dbReference type="GO" id="GO:0016020">
    <property type="term" value="C:membrane"/>
    <property type="evidence" value="ECO:0007669"/>
    <property type="project" value="GOC"/>
</dbReference>
<dbReference type="GO" id="GO:0019171">
    <property type="term" value="F:(3R)-hydroxyacyl-[acyl-carrier-protein] dehydratase activity"/>
    <property type="evidence" value="ECO:0007669"/>
    <property type="project" value="UniProtKB-EC"/>
</dbReference>
<dbReference type="GO" id="GO:0006633">
    <property type="term" value="P:fatty acid biosynthetic process"/>
    <property type="evidence" value="ECO:0007669"/>
    <property type="project" value="UniProtKB-UniRule"/>
</dbReference>
<dbReference type="GO" id="GO:0009245">
    <property type="term" value="P:lipid A biosynthetic process"/>
    <property type="evidence" value="ECO:0007669"/>
    <property type="project" value="UniProtKB-UniRule"/>
</dbReference>
<dbReference type="CDD" id="cd01288">
    <property type="entry name" value="FabZ"/>
    <property type="match status" value="1"/>
</dbReference>
<dbReference type="FunFam" id="3.10.129.10:FF:000001">
    <property type="entry name" value="3-hydroxyacyl-[acyl-carrier-protein] dehydratase FabZ"/>
    <property type="match status" value="1"/>
</dbReference>
<dbReference type="Gene3D" id="3.10.129.10">
    <property type="entry name" value="Hotdog Thioesterase"/>
    <property type="match status" value="1"/>
</dbReference>
<dbReference type="HAMAP" id="MF_00406">
    <property type="entry name" value="FabZ"/>
    <property type="match status" value="1"/>
</dbReference>
<dbReference type="InterPro" id="IPR013114">
    <property type="entry name" value="FabA_FabZ"/>
</dbReference>
<dbReference type="InterPro" id="IPR010084">
    <property type="entry name" value="FabZ"/>
</dbReference>
<dbReference type="InterPro" id="IPR029069">
    <property type="entry name" value="HotDog_dom_sf"/>
</dbReference>
<dbReference type="NCBIfam" id="TIGR01750">
    <property type="entry name" value="fabZ"/>
    <property type="match status" value="1"/>
</dbReference>
<dbReference type="NCBIfam" id="NF000582">
    <property type="entry name" value="PRK00006.1"/>
    <property type="match status" value="1"/>
</dbReference>
<dbReference type="PANTHER" id="PTHR30272">
    <property type="entry name" value="3-HYDROXYACYL-[ACYL-CARRIER-PROTEIN] DEHYDRATASE"/>
    <property type="match status" value="1"/>
</dbReference>
<dbReference type="PANTHER" id="PTHR30272:SF1">
    <property type="entry name" value="3-HYDROXYACYL-[ACYL-CARRIER-PROTEIN] DEHYDRATASE"/>
    <property type="match status" value="1"/>
</dbReference>
<dbReference type="Pfam" id="PF07977">
    <property type="entry name" value="FabA"/>
    <property type="match status" value="1"/>
</dbReference>
<dbReference type="SUPFAM" id="SSF54637">
    <property type="entry name" value="Thioesterase/thiol ester dehydrase-isomerase"/>
    <property type="match status" value="1"/>
</dbReference>
<protein>
    <recommendedName>
        <fullName evidence="1">3-hydroxyacyl-[acyl-carrier-protein] dehydratase FabZ</fullName>
        <ecNumber evidence="1">4.2.1.59</ecNumber>
    </recommendedName>
    <alternativeName>
        <fullName evidence="1">(3R)-hydroxymyristoyl-[acyl-carrier-protein] dehydratase</fullName>
        <shortName evidence="1">(3R)-hydroxymyristoyl-ACP dehydrase</shortName>
    </alternativeName>
    <alternativeName>
        <fullName evidence="1">Beta-hydroxyacyl-ACP dehydratase</fullName>
    </alternativeName>
</protein>
<reference key="1">
    <citation type="journal article" date="2006" name="Proc. Natl. Acad. Sci. U.S.A.">
        <title>Comparative genomics of the lactic acid bacteria.</title>
        <authorList>
            <person name="Makarova K.S."/>
            <person name="Slesarev A."/>
            <person name="Wolf Y.I."/>
            <person name="Sorokin A."/>
            <person name="Mirkin B."/>
            <person name="Koonin E.V."/>
            <person name="Pavlov A."/>
            <person name="Pavlova N."/>
            <person name="Karamychev V."/>
            <person name="Polouchine N."/>
            <person name="Shakhova V."/>
            <person name="Grigoriev I."/>
            <person name="Lou Y."/>
            <person name="Rohksar D."/>
            <person name="Lucas S."/>
            <person name="Huang K."/>
            <person name="Goodstein D.M."/>
            <person name="Hawkins T."/>
            <person name="Plengvidhya V."/>
            <person name="Welker D."/>
            <person name="Hughes J."/>
            <person name="Goh Y."/>
            <person name="Benson A."/>
            <person name="Baldwin K."/>
            <person name="Lee J.-H."/>
            <person name="Diaz-Muniz I."/>
            <person name="Dosti B."/>
            <person name="Smeianov V."/>
            <person name="Wechter W."/>
            <person name="Barabote R."/>
            <person name="Lorca G."/>
            <person name="Altermann E."/>
            <person name="Barrangou R."/>
            <person name="Ganesan B."/>
            <person name="Xie Y."/>
            <person name="Rawsthorne H."/>
            <person name="Tamir D."/>
            <person name="Parker C."/>
            <person name="Breidt F."/>
            <person name="Broadbent J.R."/>
            <person name="Hutkins R."/>
            <person name="O'Sullivan D."/>
            <person name="Steele J."/>
            <person name="Unlu G."/>
            <person name="Saier M.H. Jr."/>
            <person name="Klaenhammer T."/>
            <person name="Richardson P."/>
            <person name="Kozyavkin S."/>
            <person name="Weimer B.C."/>
            <person name="Mills D.A."/>
        </authorList>
    </citation>
    <scope>NUCLEOTIDE SEQUENCE [LARGE SCALE GENOMIC DNA]</scope>
    <source>
        <strain>ATCC BAA-331 / PSU-1</strain>
    </source>
</reference>